<reference key="1">
    <citation type="journal article" date="2009" name="Appl. Environ. Microbiol.">
        <title>Three genomes from the phylum Acidobacteria provide insight into the lifestyles of these microorganisms in soils.</title>
        <authorList>
            <person name="Ward N.L."/>
            <person name="Challacombe J.F."/>
            <person name="Janssen P.H."/>
            <person name="Henrissat B."/>
            <person name="Coutinho P.M."/>
            <person name="Wu M."/>
            <person name="Xie G."/>
            <person name="Haft D.H."/>
            <person name="Sait M."/>
            <person name="Badger J."/>
            <person name="Barabote R.D."/>
            <person name="Bradley B."/>
            <person name="Brettin T.S."/>
            <person name="Brinkac L.M."/>
            <person name="Bruce D."/>
            <person name="Creasy T."/>
            <person name="Daugherty S.C."/>
            <person name="Davidsen T.M."/>
            <person name="DeBoy R.T."/>
            <person name="Detter J.C."/>
            <person name="Dodson R.J."/>
            <person name="Durkin A.S."/>
            <person name="Ganapathy A."/>
            <person name="Gwinn-Giglio M."/>
            <person name="Han C.S."/>
            <person name="Khouri H."/>
            <person name="Kiss H."/>
            <person name="Kothari S.P."/>
            <person name="Madupu R."/>
            <person name="Nelson K.E."/>
            <person name="Nelson W.C."/>
            <person name="Paulsen I."/>
            <person name="Penn K."/>
            <person name="Ren Q."/>
            <person name="Rosovitz M.J."/>
            <person name="Selengut J.D."/>
            <person name="Shrivastava S."/>
            <person name="Sullivan S.A."/>
            <person name="Tapia R."/>
            <person name="Thompson L.S."/>
            <person name="Watkins K.L."/>
            <person name="Yang Q."/>
            <person name="Yu C."/>
            <person name="Zafar N."/>
            <person name="Zhou L."/>
            <person name="Kuske C.R."/>
        </authorList>
    </citation>
    <scope>NUCLEOTIDE SEQUENCE [LARGE SCALE GENOMIC DNA]</scope>
    <source>
        <strain>Ellin6076</strain>
    </source>
</reference>
<keyword id="KW-0021">Allosteric enzyme</keyword>
<keyword id="KW-0963">Cytoplasm</keyword>
<keyword id="KW-0378">Hydrolase</keyword>
<keyword id="KW-0479">Metal-binding</keyword>
<keyword id="KW-0645">Protease</keyword>
<keyword id="KW-0915">Sodium</keyword>
<keyword id="KW-0888">Threonine protease</keyword>
<dbReference type="EC" id="3.4.25.2" evidence="1"/>
<dbReference type="EMBL" id="CP000473">
    <property type="protein sequence ID" value="ABJ88251.1"/>
    <property type="molecule type" value="Genomic_DNA"/>
</dbReference>
<dbReference type="SMR" id="Q01Q19"/>
<dbReference type="FunCoup" id="Q01Q19">
    <property type="interactions" value="393"/>
</dbReference>
<dbReference type="STRING" id="234267.Acid_7340"/>
<dbReference type="MEROPS" id="T01.006"/>
<dbReference type="KEGG" id="sus:Acid_7340"/>
<dbReference type="eggNOG" id="COG5405">
    <property type="taxonomic scope" value="Bacteria"/>
</dbReference>
<dbReference type="HOGENOM" id="CLU_093872_1_0_0"/>
<dbReference type="InParanoid" id="Q01Q19"/>
<dbReference type="OrthoDB" id="9804884at2"/>
<dbReference type="GO" id="GO:0009376">
    <property type="term" value="C:HslUV protease complex"/>
    <property type="evidence" value="ECO:0007669"/>
    <property type="project" value="UniProtKB-UniRule"/>
</dbReference>
<dbReference type="GO" id="GO:0005839">
    <property type="term" value="C:proteasome core complex"/>
    <property type="evidence" value="ECO:0007669"/>
    <property type="project" value="InterPro"/>
</dbReference>
<dbReference type="GO" id="GO:0046872">
    <property type="term" value="F:metal ion binding"/>
    <property type="evidence" value="ECO:0007669"/>
    <property type="project" value="UniProtKB-KW"/>
</dbReference>
<dbReference type="GO" id="GO:0004298">
    <property type="term" value="F:threonine-type endopeptidase activity"/>
    <property type="evidence" value="ECO:0007669"/>
    <property type="project" value="UniProtKB-KW"/>
</dbReference>
<dbReference type="GO" id="GO:0051603">
    <property type="term" value="P:proteolysis involved in protein catabolic process"/>
    <property type="evidence" value="ECO:0007669"/>
    <property type="project" value="InterPro"/>
</dbReference>
<dbReference type="CDD" id="cd01913">
    <property type="entry name" value="protease_HslV"/>
    <property type="match status" value="1"/>
</dbReference>
<dbReference type="FunFam" id="3.60.20.10:FF:000002">
    <property type="entry name" value="ATP-dependent protease subunit HslV"/>
    <property type="match status" value="1"/>
</dbReference>
<dbReference type="Gene3D" id="3.60.20.10">
    <property type="entry name" value="Glutamine Phosphoribosylpyrophosphate, subunit 1, domain 1"/>
    <property type="match status" value="1"/>
</dbReference>
<dbReference type="HAMAP" id="MF_00248">
    <property type="entry name" value="HslV"/>
    <property type="match status" value="1"/>
</dbReference>
<dbReference type="InterPro" id="IPR022281">
    <property type="entry name" value="ATP-dep_Prtase_HsIV_su"/>
</dbReference>
<dbReference type="InterPro" id="IPR029055">
    <property type="entry name" value="Ntn_hydrolases_N"/>
</dbReference>
<dbReference type="InterPro" id="IPR001353">
    <property type="entry name" value="Proteasome_sua/b"/>
</dbReference>
<dbReference type="InterPro" id="IPR023333">
    <property type="entry name" value="Proteasome_suB-type"/>
</dbReference>
<dbReference type="NCBIfam" id="TIGR03692">
    <property type="entry name" value="ATP_dep_HslV"/>
    <property type="match status" value="1"/>
</dbReference>
<dbReference type="NCBIfam" id="NF003964">
    <property type="entry name" value="PRK05456.1"/>
    <property type="match status" value="1"/>
</dbReference>
<dbReference type="PANTHER" id="PTHR32194:SF0">
    <property type="entry name" value="ATP-DEPENDENT PROTEASE SUBUNIT HSLV"/>
    <property type="match status" value="1"/>
</dbReference>
<dbReference type="PANTHER" id="PTHR32194">
    <property type="entry name" value="METALLOPROTEASE TLDD"/>
    <property type="match status" value="1"/>
</dbReference>
<dbReference type="Pfam" id="PF00227">
    <property type="entry name" value="Proteasome"/>
    <property type="match status" value="1"/>
</dbReference>
<dbReference type="PIRSF" id="PIRSF039093">
    <property type="entry name" value="HslV"/>
    <property type="match status" value="1"/>
</dbReference>
<dbReference type="SUPFAM" id="SSF56235">
    <property type="entry name" value="N-terminal nucleophile aminohydrolases (Ntn hydrolases)"/>
    <property type="match status" value="1"/>
</dbReference>
<dbReference type="PROSITE" id="PS51476">
    <property type="entry name" value="PROTEASOME_BETA_2"/>
    <property type="match status" value="1"/>
</dbReference>
<proteinExistence type="inferred from homology"/>
<evidence type="ECO:0000255" key="1">
    <source>
        <dbReference type="HAMAP-Rule" id="MF_00248"/>
    </source>
</evidence>
<sequence>MREKIRSTTVICVRRDNKVVMAGDGQVTLGGEVLKSSARKLRRLYNDKILAGFAGSTADAFALFSRFESKLEQFNGNLSRSVVELAKEWRTDRVLRHLEALLLVSDTKSTYLVSGNGDVIEPDEGIVAIGSGGPFATAAATALLRNTKLSARRIVEESMKIAGEICIYTNQNVTFEELE</sequence>
<organism>
    <name type="scientific">Solibacter usitatus (strain Ellin6076)</name>
    <dbReference type="NCBI Taxonomy" id="234267"/>
    <lineage>
        <taxon>Bacteria</taxon>
        <taxon>Pseudomonadati</taxon>
        <taxon>Acidobacteriota</taxon>
        <taxon>Terriglobia</taxon>
        <taxon>Bryobacterales</taxon>
        <taxon>Solibacteraceae</taxon>
        <taxon>Candidatus Solibacter</taxon>
    </lineage>
</organism>
<feature type="chain" id="PRO_1000059019" description="ATP-dependent protease subunit HslV">
    <location>
        <begin position="1"/>
        <end position="179"/>
    </location>
</feature>
<feature type="active site" evidence="1">
    <location>
        <position position="8"/>
    </location>
</feature>
<feature type="binding site" evidence="1">
    <location>
        <position position="163"/>
    </location>
    <ligand>
        <name>Na(+)</name>
        <dbReference type="ChEBI" id="CHEBI:29101"/>
    </ligand>
</feature>
<feature type="binding site" evidence="1">
    <location>
        <position position="166"/>
    </location>
    <ligand>
        <name>Na(+)</name>
        <dbReference type="ChEBI" id="CHEBI:29101"/>
    </ligand>
</feature>
<feature type="binding site" evidence="1">
    <location>
        <position position="169"/>
    </location>
    <ligand>
        <name>Na(+)</name>
        <dbReference type="ChEBI" id="CHEBI:29101"/>
    </ligand>
</feature>
<accession>Q01Q19</accession>
<name>HSLV_SOLUE</name>
<gene>
    <name evidence="1" type="primary">hslV</name>
    <name type="ordered locus">Acid_7340</name>
</gene>
<comment type="function">
    <text evidence="1">Protease subunit of a proteasome-like degradation complex believed to be a general protein degrading machinery.</text>
</comment>
<comment type="catalytic activity">
    <reaction evidence="1">
        <text>ATP-dependent cleavage of peptide bonds with broad specificity.</text>
        <dbReference type="EC" id="3.4.25.2"/>
    </reaction>
</comment>
<comment type="activity regulation">
    <text evidence="1">Allosterically activated by HslU binding.</text>
</comment>
<comment type="subunit">
    <text evidence="1">A double ring-shaped homohexamer of HslV is capped on each side by a ring-shaped HslU homohexamer. The assembly of the HslU/HslV complex is dependent on binding of ATP.</text>
</comment>
<comment type="subcellular location">
    <subcellularLocation>
        <location evidence="1">Cytoplasm</location>
    </subcellularLocation>
</comment>
<comment type="similarity">
    <text evidence="1">Belongs to the peptidase T1B family. HslV subfamily.</text>
</comment>
<protein>
    <recommendedName>
        <fullName evidence="1">ATP-dependent protease subunit HslV</fullName>
        <ecNumber evidence="1">3.4.25.2</ecNumber>
    </recommendedName>
</protein>